<proteinExistence type="inferred from homology"/>
<reference key="1">
    <citation type="submission" date="2008-01" db="EMBL/GenBank/DDBJ databases">
        <title>Complete sequence of chromosome of Caulobacter sp. K31.</title>
        <authorList>
            <consortium name="US DOE Joint Genome Institute"/>
            <person name="Copeland A."/>
            <person name="Lucas S."/>
            <person name="Lapidus A."/>
            <person name="Barry K."/>
            <person name="Glavina del Rio T."/>
            <person name="Dalin E."/>
            <person name="Tice H."/>
            <person name="Pitluck S."/>
            <person name="Bruce D."/>
            <person name="Goodwin L."/>
            <person name="Thompson L.S."/>
            <person name="Brettin T."/>
            <person name="Detter J.C."/>
            <person name="Han C."/>
            <person name="Schmutz J."/>
            <person name="Larimer F."/>
            <person name="Land M."/>
            <person name="Hauser L."/>
            <person name="Kyrpides N."/>
            <person name="Kim E."/>
            <person name="Stephens C."/>
            <person name="Richardson P."/>
        </authorList>
    </citation>
    <scope>NUCLEOTIDE SEQUENCE [LARGE SCALE GENOMIC DNA]</scope>
    <source>
        <strain>K31</strain>
    </source>
</reference>
<keyword id="KW-0067">ATP-binding</keyword>
<keyword id="KW-0963">Cytoplasm</keyword>
<keyword id="KW-0275">Fatty acid biosynthesis</keyword>
<keyword id="KW-0276">Fatty acid metabolism</keyword>
<keyword id="KW-0444">Lipid biosynthesis</keyword>
<keyword id="KW-0443">Lipid metabolism</keyword>
<keyword id="KW-0547">Nucleotide-binding</keyword>
<keyword id="KW-0808">Transferase</keyword>
<protein>
    <recommendedName>
        <fullName evidence="1">Acetyl-coenzyme A carboxylase carboxyl transferase subunit alpha</fullName>
        <shortName evidence="1">ACCase subunit alpha</shortName>
        <shortName evidence="1">Acetyl-CoA carboxylase carboxyltransferase subunit alpha</shortName>
        <ecNumber evidence="1">2.1.3.15</ecNumber>
    </recommendedName>
</protein>
<dbReference type="EC" id="2.1.3.15" evidence="1"/>
<dbReference type="EMBL" id="CP000927">
    <property type="protein sequence ID" value="ABZ69865.1"/>
    <property type="molecule type" value="Genomic_DNA"/>
</dbReference>
<dbReference type="SMR" id="B0T8G4"/>
<dbReference type="STRING" id="366602.Caul_0734"/>
<dbReference type="KEGG" id="cak:Caul_0734"/>
<dbReference type="eggNOG" id="COG0825">
    <property type="taxonomic scope" value="Bacteria"/>
</dbReference>
<dbReference type="HOGENOM" id="CLU_015486_0_2_5"/>
<dbReference type="OrthoDB" id="9808023at2"/>
<dbReference type="UniPathway" id="UPA00655">
    <property type="reaction ID" value="UER00711"/>
</dbReference>
<dbReference type="GO" id="GO:0009317">
    <property type="term" value="C:acetyl-CoA carboxylase complex"/>
    <property type="evidence" value="ECO:0007669"/>
    <property type="project" value="InterPro"/>
</dbReference>
<dbReference type="GO" id="GO:0003989">
    <property type="term" value="F:acetyl-CoA carboxylase activity"/>
    <property type="evidence" value="ECO:0007669"/>
    <property type="project" value="InterPro"/>
</dbReference>
<dbReference type="GO" id="GO:0005524">
    <property type="term" value="F:ATP binding"/>
    <property type="evidence" value="ECO:0007669"/>
    <property type="project" value="UniProtKB-KW"/>
</dbReference>
<dbReference type="GO" id="GO:0016743">
    <property type="term" value="F:carboxyl- or carbamoyltransferase activity"/>
    <property type="evidence" value="ECO:0007669"/>
    <property type="project" value="UniProtKB-UniRule"/>
</dbReference>
<dbReference type="GO" id="GO:0006633">
    <property type="term" value="P:fatty acid biosynthetic process"/>
    <property type="evidence" value="ECO:0007669"/>
    <property type="project" value="UniProtKB-KW"/>
</dbReference>
<dbReference type="GO" id="GO:2001295">
    <property type="term" value="P:malonyl-CoA biosynthetic process"/>
    <property type="evidence" value="ECO:0007669"/>
    <property type="project" value="UniProtKB-UniRule"/>
</dbReference>
<dbReference type="Gene3D" id="3.90.226.10">
    <property type="entry name" value="2-enoyl-CoA Hydratase, Chain A, domain 1"/>
    <property type="match status" value="1"/>
</dbReference>
<dbReference type="HAMAP" id="MF_00823">
    <property type="entry name" value="AcetylCoA_CT_alpha"/>
    <property type="match status" value="1"/>
</dbReference>
<dbReference type="InterPro" id="IPR001095">
    <property type="entry name" value="Acetyl_CoA_COase_a_su"/>
</dbReference>
<dbReference type="InterPro" id="IPR029045">
    <property type="entry name" value="ClpP/crotonase-like_dom_sf"/>
</dbReference>
<dbReference type="InterPro" id="IPR011763">
    <property type="entry name" value="COA_CT_C"/>
</dbReference>
<dbReference type="NCBIfam" id="TIGR00513">
    <property type="entry name" value="accA"/>
    <property type="match status" value="1"/>
</dbReference>
<dbReference type="NCBIfam" id="NF041504">
    <property type="entry name" value="AccA_sub"/>
    <property type="match status" value="1"/>
</dbReference>
<dbReference type="NCBIfam" id="NF004344">
    <property type="entry name" value="PRK05724.1"/>
    <property type="match status" value="1"/>
</dbReference>
<dbReference type="PANTHER" id="PTHR42853">
    <property type="entry name" value="ACETYL-COENZYME A CARBOXYLASE CARBOXYL TRANSFERASE SUBUNIT ALPHA"/>
    <property type="match status" value="1"/>
</dbReference>
<dbReference type="PANTHER" id="PTHR42853:SF3">
    <property type="entry name" value="ACETYL-COENZYME A CARBOXYLASE CARBOXYL TRANSFERASE SUBUNIT ALPHA, CHLOROPLASTIC"/>
    <property type="match status" value="1"/>
</dbReference>
<dbReference type="Pfam" id="PF03255">
    <property type="entry name" value="ACCA"/>
    <property type="match status" value="1"/>
</dbReference>
<dbReference type="PRINTS" id="PR01069">
    <property type="entry name" value="ACCCTRFRASEA"/>
</dbReference>
<dbReference type="SUPFAM" id="SSF52096">
    <property type="entry name" value="ClpP/crotonase"/>
    <property type="match status" value="1"/>
</dbReference>
<dbReference type="PROSITE" id="PS50989">
    <property type="entry name" value="COA_CT_CTER"/>
    <property type="match status" value="1"/>
</dbReference>
<feature type="chain" id="PRO_1000083922" description="Acetyl-coenzyme A carboxylase carboxyl transferase subunit alpha">
    <location>
        <begin position="1"/>
        <end position="320"/>
    </location>
</feature>
<feature type="domain" description="CoA carboxyltransferase C-terminal" evidence="2">
    <location>
        <begin position="33"/>
        <end position="294"/>
    </location>
</feature>
<sequence>MAAHYLDFERPIADLESKIEELSKLSETAGPGAFESEIQALRDRAQQMRKEAYAGLDAWQKTMVARHPERPHLKDYIAGLIDEFVELRGDRKFADDQAIVGGLGRFRGVPVVVMGHEKGHDTTTRLKHNFGMARPEGYRKAVRLMDMAERFNLPVITFVDTAGAYPGLGAEERGQAEAIARSTERGLVLGTPMVATIVGEGGSGGAIALAGANKVLILEHSIYSVISPEGAASILWRDGARAKDAAANMKITAQDLIQLKIVDRIVEEPAGGAHSDPDAAIQSVGDAVEDELKALMKLSAAELKKQRAARFYAIGREGLQ</sequence>
<gene>
    <name evidence="1" type="primary">accA</name>
    <name type="ordered locus">Caul_0734</name>
</gene>
<organism>
    <name type="scientific">Caulobacter sp. (strain K31)</name>
    <dbReference type="NCBI Taxonomy" id="366602"/>
    <lineage>
        <taxon>Bacteria</taxon>
        <taxon>Pseudomonadati</taxon>
        <taxon>Pseudomonadota</taxon>
        <taxon>Alphaproteobacteria</taxon>
        <taxon>Caulobacterales</taxon>
        <taxon>Caulobacteraceae</taxon>
        <taxon>Caulobacter</taxon>
    </lineage>
</organism>
<accession>B0T8G4</accession>
<comment type="function">
    <text evidence="1">Component of the acetyl coenzyme A carboxylase (ACC) complex. First, biotin carboxylase catalyzes the carboxylation of biotin on its carrier protein (BCCP) and then the CO(2) group is transferred by the carboxyltransferase to acetyl-CoA to form malonyl-CoA.</text>
</comment>
<comment type="catalytic activity">
    <reaction evidence="1">
        <text>N(6)-carboxybiotinyl-L-lysyl-[protein] + acetyl-CoA = N(6)-biotinyl-L-lysyl-[protein] + malonyl-CoA</text>
        <dbReference type="Rhea" id="RHEA:54728"/>
        <dbReference type="Rhea" id="RHEA-COMP:10505"/>
        <dbReference type="Rhea" id="RHEA-COMP:10506"/>
        <dbReference type="ChEBI" id="CHEBI:57288"/>
        <dbReference type="ChEBI" id="CHEBI:57384"/>
        <dbReference type="ChEBI" id="CHEBI:83144"/>
        <dbReference type="ChEBI" id="CHEBI:83145"/>
        <dbReference type="EC" id="2.1.3.15"/>
    </reaction>
</comment>
<comment type="pathway">
    <text evidence="1">Lipid metabolism; malonyl-CoA biosynthesis; malonyl-CoA from acetyl-CoA: step 1/1.</text>
</comment>
<comment type="subunit">
    <text evidence="1">Acetyl-CoA carboxylase is a heterohexamer composed of biotin carboxyl carrier protein (AccB), biotin carboxylase (AccC) and two subunits each of ACCase subunit alpha (AccA) and ACCase subunit beta (AccD).</text>
</comment>
<comment type="subcellular location">
    <subcellularLocation>
        <location evidence="1">Cytoplasm</location>
    </subcellularLocation>
</comment>
<comment type="similarity">
    <text evidence="1">Belongs to the AccA family.</text>
</comment>
<evidence type="ECO:0000255" key="1">
    <source>
        <dbReference type="HAMAP-Rule" id="MF_00823"/>
    </source>
</evidence>
<evidence type="ECO:0000255" key="2">
    <source>
        <dbReference type="PROSITE-ProRule" id="PRU01137"/>
    </source>
</evidence>
<name>ACCA_CAUSK</name>